<name>KAD2_MOUSE</name>
<proteinExistence type="evidence at protein level"/>
<organism>
    <name type="scientific">Mus musculus</name>
    <name type="common">Mouse</name>
    <dbReference type="NCBI Taxonomy" id="10090"/>
    <lineage>
        <taxon>Eukaryota</taxon>
        <taxon>Metazoa</taxon>
        <taxon>Chordata</taxon>
        <taxon>Craniata</taxon>
        <taxon>Vertebrata</taxon>
        <taxon>Euteleostomi</taxon>
        <taxon>Mammalia</taxon>
        <taxon>Eutheria</taxon>
        <taxon>Euarchontoglires</taxon>
        <taxon>Glires</taxon>
        <taxon>Rodentia</taxon>
        <taxon>Myomorpha</taxon>
        <taxon>Muroidea</taxon>
        <taxon>Muridae</taxon>
        <taxon>Murinae</taxon>
        <taxon>Mus</taxon>
        <taxon>Mus</taxon>
    </lineage>
</organism>
<feature type="chain" id="PRO_0000158918" description="Adenylate kinase 2, mitochondrial">
    <location>
        <begin position="1"/>
        <end position="239"/>
    </location>
</feature>
<feature type="region of interest" description="NMP" evidence="2">
    <location>
        <begin position="45"/>
        <end position="74"/>
    </location>
</feature>
<feature type="region of interest" description="LID" evidence="2">
    <location>
        <begin position="141"/>
        <end position="178"/>
    </location>
</feature>
<feature type="binding site" evidence="2">
    <location>
        <begin position="25"/>
        <end position="30"/>
    </location>
    <ligand>
        <name>ATP</name>
        <dbReference type="ChEBI" id="CHEBI:30616"/>
    </ligand>
</feature>
<feature type="binding site" evidence="2">
    <location>
        <position position="46"/>
    </location>
    <ligand>
        <name>AMP</name>
        <dbReference type="ChEBI" id="CHEBI:456215"/>
    </ligand>
</feature>
<feature type="binding site" evidence="2">
    <location>
        <position position="51"/>
    </location>
    <ligand>
        <name>AMP</name>
        <dbReference type="ChEBI" id="CHEBI:456215"/>
    </ligand>
</feature>
<feature type="binding site" evidence="2">
    <location>
        <begin position="72"/>
        <end position="74"/>
    </location>
    <ligand>
        <name>AMP</name>
        <dbReference type="ChEBI" id="CHEBI:456215"/>
    </ligand>
</feature>
<feature type="binding site" evidence="2">
    <location>
        <begin position="100"/>
        <end position="103"/>
    </location>
    <ligand>
        <name>AMP</name>
        <dbReference type="ChEBI" id="CHEBI:456215"/>
    </ligand>
</feature>
<feature type="binding site" evidence="2">
    <location>
        <position position="107"/>
    </location>
    <ligand>
        <name>AMP</name>
        <dbReference type="ChEBI" id="CHEBI:456215"/>
    </ligand>
</feature>
<feature type="binding site" evidence="2">
    <location>
        <position position="142"/>
    </location>
    <ligand>
        <name>ATP</name>
        <dbReference type="ChEBI" id="CHEBI:30616"/>
    </ligand>
</feature>
<feature type="binding site" evidence="2">
    <location>
        <begin position="151"/>
        <end position="152"/>
    </location>
    <ligand>
        <name>ATP</name>
        <dbReference type="ChEBI" id="CHEBI:30616"/>
    </ligand>
</feature>
<feature type="binding site" evidence="2">
    <location>
        <position position="175"/>
    </location>
    <ligand>
        <name>AMP</name>
        <dbReference type="ChEBI" id="CHEBI:456215"/>
    </ligand>
</feature>
<feature type="binding site" evidence="2">
    <location>
        <position position="186"/>
    </location>
    <ligand>
        <name>AMP</name>
        <dbReference type="ChEBI" id="CHEBI:456215"/>
    </ligand>
</feature>
<feature type="binding site" evidence="2">
    <location>
        <position position="214"/>
    </location>
    <ligand>
        <name>ATP</name>
        <dbReference type="ChEBI" id="CHEBI:30616"/>
    </ligand>
</feature>
<feature type="modified residue" description="N-acetylmethionine" evidence="1">
    <location>
        <position position="1"/>
    </location>
</feature>
<feature type="modified residue" description="Phosphoserine" evidence="1">
    <location>
        <position position="58"/>
    </location>
</feature>
<feature type="modified residue" description="N6-succinyllysine" evidence="10">
    <location>
        <position position="62"/>
    </location>
</feature>
<feature type="modified residue" description="Phosphoserine" evidence="8">
    <location>
        <position position="91"/>
    </location>
</feature>
<feature type="modified residue" description="N6-succinyllysine" evidence="10">
    <location>
        <position position="93"/>
    </location>
</feature>
<feature type="modified residue" description="Phosphoserine" evidence="1">
    <location>
        <position position="133"/>
    </location>
</feature>
<feature type="modified residue" description="N6-acetyllysine" evidence="9">
    <location>
        <position position="181"/>
    </location>
</feature>
<feature type="modified residue" description="Phosphothreonine" evidence="1">
    <location>
        <position position="195"/>
    </location>
</feature>
<feature type="disulfide bond" evidence="2">
    <location>
        <begin position="42"/>
        <end position="92"/>
    </location>
</feature>
<feature type="splice variant" id="VSP_036504" description="In isoform 2." evidence="4 5 6">
    <original>CKDLVMFI</original>
    <variation>S</variation>
    <location>
        <begin position="232"/>
        <end position="239"/>
    </location>
</feature>
<feature type="sequence conflict" description="In Ref. 1; BAA77359." evidence="7" ref="1">
    <original>G</original>
    <variation>R</variation>
    <location>
        <position position="61"/>
    </location>
</feature>
<feature type="sequence conflict" description="In Ref. 2; BAE40113." evidence="7" ref="2">
    <original>M</original>
    <variation>V</variation>
    <location>
        <position position="110"/>
    </location>
</feature>
<feature type="sequence conflict" description="In Ref. 1; BAA77359." evidence="7" ref="1">
    <original>D</original>
    <variation>E</variation>
    <location>
        <position position="113"/>
    </location>
</feature>
<feature type="sequence conflict" description="In Ref. 1; BAA77359." evidence="7" ref="1">
    <original>K</original>
    <variation>E</variation>
    <location>
        <position position="121"/>
    </location>
</feature>
<feature type="sequence conflict" description="In Ref. 1; BAA77359." evidence="7" ref="1">
    <original>H</original>
    <variation>R</variation>
    <location>
        <position position="145"/>
    </location>
</feature>
<feature type="sequence conflict" description="In Ref. 2; BAE40113." evidence="7" ref="2">
    <original>P</original>
    <variation>R</variation>
    <location>
        <position position="146"/>
    </location>
</feature>
<feature type="sequence conflict" description="In Ref. 1; BAA77359." evidence="7" ref="1">
    <original>S</original>
    <variation>F</variation>
    <location>
        <position position="151"/>
    </location>
</feature>
<feature type="sequence conflict" description="In Ref. 1; BAA77359." evidence="7" ref="1">
    <original>H</original>
    <variation>Y</variation>
    <location>
        <position position="191"/>
    </location>
</feature>
<feature type="sequence conflict" description="In Ref. 2; BAE40035." evidence="7" ref="2">
    <original>R</original>
    <variation>H</variation>
    <location>
        <position position="204"/>
    </location>
</feature>
<keyword id="KW-0007">Acetylation</keyword>
<keyword id="KW-0025">Alternative splicing</keyword>
<keyword id="KW-0067">ATP-binding</keyword>
<keyword id="KW-0903">Direct protein sequencing</keyword>
<keyword id="KW-1015">Disulfide bond</keyword>
<keyword id="KW-0418">Kinase</keyword>
<keyword id="KW-0496">Mitochondrion</keyword>
<keyword id="KW-0547">Nucleotide-binding</keyword>
<keyword id="KW-0597">Phosphoprotein</keyword>
<keyword id="KW-1185">Reference proteome</keyword>
<keyword id="KW-0808">Transferase</keyword>
<protein>
    <recommendedName>
        <fullName evidence="2">Adenylate kinase 2, mitochondrial</fullName>
        <shortName evidence="2">AK 2</shortName>
        <ecNumber evidence="2">2.7.4.3</ecNumber>
    </recommendedName>
    <alternativeName>
        <fullName evidence="2">ATP-AMP transphosphorylase 2</fullName>
    </alternativeName>
    <alternativeName>
        <fullName evidence="2">ATP:AMP phosphotransferase</fullName>
    </alternativeName>
    <alternativeName>
        <fullName evidence="2">Adenylate monophosphate kinase</fullName>
    </alternativeName>
</protein>
<gene>
    <name type="primary">Ak2</name>
</gene>
<reference key="1">
    <citation type="submission" date="1998-11" db="EMBL/GenBank/DDBJ databases">
        <authorList>
            <person name="Noma T."/>
        </authorList>
    </citation>
    <scope>NUCLEOTIDE SEQUENCE [MRNA] (ISOFORM 2)</scope>
</reference>
<reference key="2">
    <citation type="journal article" date="2005" name="Science">
        <title>The transcriptional landscape of the mammalian genome.</title>
        <authorList>
            <person name="Carninci P."/>
            <person name="Kasukawa T."/>
            <person name="Katayama S."/>
            <person name="Gough J."/>
            <person name="Frith M.C."/>
            <person name="Maeda N."/>
            <person name="Oyama R."/>
            <person name="Ravasi T."/>
            <person name="Lenhard B."/>
            <person name="Wells C."/>
            <person name="Kodzius R."/>
            <person name="Shimokawa K."/>
            <person name="Bajic V.B."/>
            <person name="Brenner S.E."/>
            <person name="Batalov S."/>
            <person name="Forrest A.R."/>
            <person name="Zavolan M."/>
            <person name="Davis M.J."/>
            <person name="Wilming L.G."/>
            <person name="Aidinis V."/>
            <person name="Allen J.E."/>
            <person name="Ambesi-Impiombato A."/>
            <person name="Apweiler R."/>
            <person name="Aturaliya R.N."/>
            <person name="Bailey T.L."/>
            <person name="Bansal M."/>
            <person name="Baxter L."/>
            <person name="Beisel K.W."/>
            <person name="Bersano T."/>
            <person name="Bono H."/>
            <person name="Chalk A.M."/>
            <person name="Chiu K.P."/>
            <person name="Choudhary V."/>
            <person name="Christoffels A."/>
            <person name="Clutterbuck D.R."/>
            <person name="Crowe M.L."/>
            <person name="Dalla E."/>
            <person name="Dalrymple B.P."/>
            <person name="de Bono B."/>
            <person name="Della Gatta G."/>
            <person name="di Bernardo D."/>
            <person name="Down T."/>
            <person name="Engstrom P."/>
            <person name="Fagiolini M."/>
            <person name="Faulkner G."/>
            <person name="Fletcher C.F."/>
            <person name="Fukushima T."/>
            <person name="Furuno M."/>
            <person name="Futaki S."/>
            <person name="Gariboldi M."/>
            <person name="Georgii-Hemming P."/>
            <person name="Gingeras T.R."/>
            <person name="Gojobori T."/>
            <person name="Green R.E."/>
            <person name="Gustincich S."/>
            <person name="Harbers M."/>
            <person name="Hayashi Y."/>
            <person name="Hensch T.K."/>
            <person name="Hirokawa N."/>
            <person name="Hill D."/>
            <person name="Huminiecki L."/>
            <person name="Iacono M."/>
            <person name="Ikeo K."/>
            <person name="Iwama A."/>
            <person name="Ishikawa T."/>
            <person name="Jakt M."/>
            <person name="Kanapin A."/>
            <person name="Katoh M."/>
            <person name="Kawasawa Y."/>
            <person name="Kelso J."/>
            <person name="Kitamura H."/>
            <person name="Kitano H."/>
            <person name="Kollias G."/>
            <person name="Krishnan S.P."/>
            <person name="Kruger A."/>
            <person name="Kummerfeld S.K."/>
            <person name="Kurochkin I.V."/>
            <person name="Lareau L.F."/>
            <person name="Lazarevic D."/>
            <person name="Lipovich L."/>
            <person name="Liu J."/>
            <person name="Liuni S."/>
            <person name="McWilliam S."/>
            <person name="Madan Babu M."/>
            <person name="Madera M."/>
            <person name="Marchionni L."/>
            <person name="Matsuda H."/>
            <person name="Matsuzawa S."/>
            <person name="Miki H."/>
            <person name="Mignone F."/>
            <person name="Miyake S."/>
            <person name="Morris K."/>
            <person name="Mottagui-Tabar S."/>
            <person name="Mulder N."/>
            <person name="Nakano N."/>
            <person name="Nakauchi H."/>
            <person name="Ng P."/>
            <person name="Nilsson R."/>
            <person name="Nishiguchi S."/>
            <person name="Nishikawa S."/>
            <person name="Nori F."/>
            <person name="Ohara O."/>
            <person name="Okazaki Y."/>
            <person name="Orlando V."/>
            <person name="Pang K.C."/>
            <person name="Pavan W.J."/>
            <person name="Pavesi G."/>
            <person name="Pesole G."/>
            <person name="Petrovsky N."/>
            <person name="Piazza S."/>
            <person name="Reed J."/>
            <person name="Reid J.F."/>
            <person name="Ring B.Z."/>
            <person name="Ringwald M."/>
            <person name="Rost B."/>
            <person name="Ruan Y."/>
            <person name="Salzberg S.L."/>
            <person name="Sandelin A."/>
            <person name="Schneider C."/>
            <person name="Schoenbach C."/>
            <person name="Sekiguchi K."/>
            <person name="Semple C.A."/>
            <person name="Seno S."/>
            <person name="Sessa L."/>
            <person name="Sheng Y."/>
            <person name="Shibata Y."/>
            <person name="Shimada H."/>
            <person name="Shimada K."/>
            <person name="Silva D."/>
            <person name="Sinclair B."/>
            <person name="Sperling S."/>
            <person name="Stupka E."/>
            <person name="Sugiura K."/>
            <person name="Sultana R."/>
            <person name="Takenaka Y."/>
            <person name="Taki K."/>
            <person name="Tammoja K."/>
            <person name="Tan S.L."/>
            <person name="Tang S."/>
            <person name="Taylor M.S."/>
            <person name="Tegner J."/>
            <person name="Teichmann S.A."/>
            <person name="Ueda H.R."/>
            <person name="van Nimwegen E."/>
            <person name="Verardo R."/>
            <person name="Wei C.L."/>
            <person name="Yagi K."/>
            <person name="Yamanishi H."/>
            <person name="Zabarovsky E."/>
            <person name="Zhu S."/>
            <person name="Zimmer A."/>
            <person name="Hide W."/>
            <person name="Bult C."/>
            <person name="Grimmond S.M."/>
            <person name="Teasdale R.D."/>
            <person name="Liu E.T."/>
            <person name="Brusic V."/>
            <person name="Quackenbush J."/>
            <person name="Wahlestedt C."/>
            <person name="Mattick J.S."/>
            <person name="Hume D.A."/>
            <person name="Kai C."/>
            <person name="Sasaki D."/>
            <person name="Tomaru Y."/>
            <person name="Fukuda S."/>
            <person name="Kanamori-Katayama M."/>
            <person name="Suzuki M."/>
            <person name="Aoki J."/>
            <person name="Arakawa T."/>
            <person name="Iida J."/>
            <person name="Imamura K."/>
            <person name="Itoh M."/>
            <person name="Kato T."/>
            <person name="Kawaji H."/>
            <person name="Kawagashira N."/>
            <person name="Kawashima T."/>
            <person name="Kojima M."/>
            <person name="Kondo S."/>
            <person name="Konno H."/>
            <person name="Nakano K."/>
            <person name="Ninomiya N."/>
            <person name="Nishio T."/>
            <person name="Okada M."/>
            <person name="Plessy C."/>
            <person name="Shibata K."/>
            <person name="Shiraki T."/>
            <person name="Suzuki S."/>
            <person name="Tagami M."/>
            <person name="Waki K."/>
            <person name="Watahiki A."/>
            <person name="Okamura-Oho Y."/>
            <person name="Suzuki H."/>
            <person name="Kawai J."/>
            <person name="Hayashizaki Y."/>
        </authorList>
    </citation>
    <scope>NUCLEOTIDE SEQUENCE [LARGE SCALE MRNA] (ISOFORMS 1 AND 2)</scope>
    <source>
        <strain>BALB/cJ</strain>
        <strain>C57BL/6J</strain>
        <tissue>Embryonic liver</tissue>
        <tissue>Liver</tissue>
    </source>
</reference>
<reference key="3">
    <citation type="journal article" date="2009" name="PLoS Biol.">
        <title>Lineage-specific biology revealed by a finished genome assembly of the mouse.</title>
        <authorList>
            <person name="Church D.M."/>
            <person name="Goodstadt L."/>
            <person name="Hillier L.W."/>
            <person name="Zody M.C."/>
            <person name="Goldstein S."/>
            <person name="She X."/>
            <person name="Bult C.J."/>
            <person name="Agarwala R."/>
            <person name="Cherry J.L."/>
            <person name="DiCuccio M."/>
            <person name="Hlavina W."/>
            <person name="Kapustin Y."/>
            <person name="Meric P."/>
            <person name="Maglott D."/>
            <person name="Birtle Z."/>
            <person name="Marques A.C."/>
            <person name="Graves T."/>
            <person name="Zhou S."/>
            <person name="Teague B."/>
            <person name="Potamousis K."/>
            <person name="Churas C."/>
            <person name="Place M."/>
            <person name="Herschleb J."/>
            <person name="Runnheim R."/>
            <person name="Forrest D."/>
            <person name="Amos-Landgraf J."/>
            <person name="Schwartz D.C."/>
            <person name="Cheng Z."/>
            <person name="Lindblad-Toh K."/>
            <person name="Eichler E.E."/>
            <person name="Ponting C.P."/>
        </authorList>
    </citation>
    <scope>NUCLEOTIDE SEQUENCE [LARGE SCALE GENOMIC DNA]</scope>
    <source>
        <strain>C57BL/6J</strain>
    </source>
</reference>
<reference key="4">
    <citation type="journal article" date="2004" name="Genome Res.">
        <title>The status, quality, and expansion of the NIH full-length cDNA project: the Mammalian Gene Collection (MGC).</title>
        <authorList>
            <consortium name="The MGC Project Team"/>
        </authorList>
    </citation>
    <scope>NUCLEOTIDE SEQUENCE [LARGE SCALE MRNA] (ISOFORM 2)</scope>
</reference>
<reference key="5">
    <citation type="submission" date="2007-07" db="UniProtKB">
        <authorList>
            <person name="Lubec G."/>
            <person name="Yang J.W."/>
            <person name="Zigmond M."/>
        </authorList>
    </citation>
    <scope>PROTEIN SEQUENCE OF 94-103</scope>
    <source>
        <tissue>Brain</tissue>
    </source>
</reference>
<reference key="6">
    <citation type="journal article" date="2009" name="Nat. Genet.">
        <title>Human adenylate kinase 2 deficiency causes a profound hematopoietic defect associated with sensorineural deafness.</title>
        <authorList>
            <person name="Lagresle-Peyrou C."/>
            <person name="Six E.M."/>
            <person name="Picard C."/>
            <person name="Rieux-Laucat F."/>
            <person name="Michel V."/>
            <person name="Ditadi A."/>
            <person name="Chappedelaine C.D."/>
            <person name="Morillon E."/>
            <person name="Valensi F."/>
            <person name="Simon-Stoos K.L."/>
            <person name="Mullikin J.C."/>
            <person name="Noroski L.M."/>
            <person name="Besse C."/>
            <person name="Wulffraat N.M."/>
            <person name="Ferster A."/>
            <person name="Abecasis M.M."/>
            <person name="Calvo F."/>
            <person name="Petit C."/>
            <person name="Candotti F."/>
            <person name="Abel L."/>
            <person name="Fischer A."/>
            <person name="Cavazzana-Calvo M."/>
        </authorList>
    </citation>
    <scope>TISSUE SPECIFICITY</scope>
</reference>
<reference key="7">
    <citation type="journal article" date="2010" name="Cell">
        <title>A tissue-specific atlas of mouse protein phosphorylation and expression.</title>
        <authorList>
            <person name="Huttlin E.L."/>
            <person name="Jedrychowski M.P."/>
            <person name="Elias J.E."/>
            <person name="Goswami T."/>
            <person name="Rad R."/>
            <person name="Beausoleil S.A."/>
            <person name="Villen J."/>
            <person name="Haas W."/>
            <person name="Sowa M.E."/>
            <person name="Gygi S.P."/>
        </authorList>
    </citation>
    <scope>PHOSPHORYLATION [LARGE SCALE ANALYSIS] AT SER-91</scope>
    <scope>IDENTIFICATION BY MASS SPECTROMETRY [LARGE SCALE ANALYSIS]</scope>
    <source>
        <tissue>Brain</tissue>
        <tissue>Brown adipose tissue</tissue>
        <tissue>Heart</tissue>
        <tissue>Kidney</tissue>
        <tissue>Liver</tissue>
        <tissue>Lung</tissue>
        <tissue>Pancreas</tissue>
        <tissue>Spleen</tissue>
        <tissue>Testis</tissue>
    </source>
</reference>
<reference key="8">
    <citation type="journal article" date="2013" name="Mol. Cell">
        <title>SIRT5-mediated lysine desuccinylation impacts diverse metabolic pathways.</title>
        <authorList>
            <person name="Park J."/>
            <person name="Chen Y."/>
            <person name="Tishkoff D.X."/>
            <person name="Peng C."/>
            <person name="Tan M."/>
            <person name="Dai L."/>
            <person name="Xie Z."/>
            <person name="Zhang Y."/>
            <person name="Zwaans B.M."/>
            <person name="Skinner M.E."/>
            <person name="Lombard D.B."/>
            <person name="Zhao Y."/>
        </authorList>
    </citation>
    <scope>SUCCINYLATION [LARGE SCALE ANALYSIS] AT LYS-62 AND LYS-93</scope>
    <scope>IDENTIFICATION BY MASS SPECTROMETRY [LARGE SCALE ANALYSIS]</scope>
    <source>
        <tissue>Liver</tissue>
    </source>
</reference>
<reference key="9">
    <citation type="journal article" date="2013" name="Proc. Natl. Acad. Sci. U.S.A.">
        <title>Label-free quantitative proteomics of the lysine acetylome in mitochondria identifies substrates of SIRT3 in metabolic pathways.</title>
        <authorList>
            <person name="Rardin M.J."/>
            <person name="Newman J.C."/>
            <person name="Held J.M."/>
            <person name="Cusack M.P."/>
            <person name="Sorensen D.J."/>
            <person name="Li B."/>
            <person name="Schilling B."/>
            <person name="Mooney S.D."/>
            <person name="Kahn C.R."/>
            <person name="Verdin E."/>
            <person name="Gibson B.W."/>
        </authorList>
    </citation>
    <scope>ACETYLATION [LARGE SCALE ANALYSIS] AT LYS-181</scope>
    <scope>IDENTIFICATION BY MASS SPECTROMETRY [LARGE SCALE ANALYSIS]</scope>
    <source>
        <tissue>Liver</tissue>
    </source>
</reference>
<dbReference type="EC" id="2.7.4.3" evidence="2"/>
<dbReference type="EMBL" id="AB020202">
    <property type="protein sequence ID" value="BAA77359.1"/>
    <property type="molecule type" value="mRNA"/>
</dbReference>
<dbReference type="EMBL" id="AK010951">
    <property type="protein sequence ID" value="BAB27286.1"/>
    <property type="molecule type" value="mRNA"/>
</dbReference>
<dbReference type="EMBL" id="AK050133">
    <property type="protein sequence ID" value="BAC34085.1"/>
    <property type="molecule type" value="mRNA"/>
</dbReference>
<dbReference type="EMBL" id="AK166976">
    <property type="protein sequence ID" value="BAE39159.1"/>
    <property type="molecule type" value="mRNA"/>
</dbReference>
<dbReference type="EMBL" id="AK168056">
    <property type="protein sequence ID" value="BAE40035.1"/>
    <property type="molecule type" value="mRNA"/>
</dbReference>
<dbReference type="EMBL" id="AK168148">
    <property type="protein sequence ID" value="BAE40113.1"/>
    <property type="molecule type" value="mRNA"/>
</dbReference>
<dbReference type="EMBL" id="AL607086">
    <property type="status" value="NOT_ANNOTATED_CDS"/>
    <property type="molecule type" value="Genomic_DNA"/>
</dbReference>
<dbReference type="EMBL" id="CU210866">
    <property type="status" value="NOT_ANNOTATED_CDS"/>
    <property type="molecule type" value="Genomic_DNA"/>
</dbReference>
<dbReference type="EMBL" id="BC008610">
    <property type="protein sequence ID" value="AAH08610.1"/>
    <property type="molecule type" value="mRNA"/>
</dbReference>
<dbReference type="CCDS" id="CCDS18679.1">
    <molecule id="Q9WTP6-2"/>
</dbReference>
<dbReference type="CCDS" id="CCDS18680.1">
    <molecule id="Q9WTP6-1"/>
</dbReference>
<dbReference type="RefSeq" id="NP_001029138.1">
    <molecule id="Q9WTP6-1"/>
    <property type="nucleotide sequence ID" value="NM_001033966.4"/>
</dbReference>
<dbReference type="RefSeq" id="NP_058591.2">
    <molecule id="Q9WTP6-2"/>
    <property type="nucleotide sequence ID" value="NM_016895.4"/>
</dbReference>
<dbReference type="SMR" id="Q9WTP6"/>
<dbReference type="BioGRID" id="198046">
    <property type="interactions" value="7"/>
</dbReference>
<dbReference type="FunCoup" id="Q9WTP6">
    <property type="interactions" value="2514"/>
</dbReference>
<dbReference type="STRING" id="10090.ENSMUSP00000030583"/>
<dbReference type="GlyGen" id="Q9WTP6">
    <property type="glycosylation" value="1 site, 1 O-linked glycan (1 site)"/>
</dbReference>
<dbReference type="iPTMnet" id="Q9WTP6"/>
<dbReference type="PhosphoSitePlus" id="Q9WTP6"/>
<dbReference type="SwissPalm" id="Q9WTP6"/>
<dbReference type="REPRODUCTION-2DPAGE" id="Q9WTP6"/>
<dbReference type="CPTAC" id="non-CPTAC-3717"/>
<dbReference type="jPOST" id="Q9WTP6"/>
<dbReference type="PaxDb" id="10090-ENSMUSP00000030583"/>
<dbReference type="PeptideAtlas" id="Q9WTP6"/>
<dbReference type="ProteomicsDB" id="269236">
    <molecule id="Q9WTP6-1"/>
</dbReference>
<dbReference type="ProteomicsDB" id="269237">
    <molecule id="Q9WTP6-2"/>
</dbReference>
<dbReference type="Pumba" id="Q9WTP6"/>
<dbReference type="Antibodypedia" id="17047">
    <property type="antibodies" value="455 antibodies from 33 providers"/>
</dbReference>
<dbReference type="DNASU" id="11637"/>
<dbReference type="Ensembl" id="ENSMUST00000030583.13">
    <molecule id="Q9WTP6-1"/>
    <property type="protein sequence ID" value="ENSMUSP00000030583.7"/>
    <property type="gene ID" value="ENSMUSG00000028792.15"/>
</dbReference>
<dbReference type="Ensembl" id="ENSMUST00000102604.11">
    <molecule id="Q9WTP6-2"/>
    <property type="protein sequence ID" value="ENSMUSP00000099664.5"/>
    <property type="gene ID" value="ENSMUSG00000028792.15"/>
</dbReference>
<dbReference type="GeneID" id="11637"/>
<dbReference type="KEGG" id="mmu:11637"/>
<dbReference type="UCSC" id="uc008uvt.2">
    <molecule id="Q9WTP6-1"/>
    <property type="organism name" value="mouse"/>
</dbReference>
<dbReference type="UCSC" id="uc008uvu.2">
    <molecule id="Q9WTP6-2"/>
    <property type="organism name" value="mouse"/>
</dbReference>
<dbReference type="AGR" id="MGI:87978"/>
<dbReference type="CTD" id="204"/>
<dbReference type="MGI" id="MGI:87978">
    <property type="gene designation" value="Ak2"/>
</dbReference>
<dbReference type="VEuPathDB" id="HostDB:ENSMUSG00000028792"/>
<dbReference type="eggNOG" id="KOG3078">
    <property type="taxonomic scope" value="Eukaryota"/>
</dbReference>
<dbReference type="GeneTree" id="ENSGT00940000154576"/>
<dbReference type="HOGENOM" id="CLU_032354_1_0_1"/>
<dbReference type="InParanoid" id="Q9WTP6"/>
<dbReference type="OMA" id="VYHEQTA"/>
<dbReference type="OrthoDB" id="20911at9989"/>
<dbReference type="PhylomeDB" id="Q9WTP6"/>
<dbReference type="TreeFam" id="TF300896"/>
<dbReference type="BRENDA" id="2.7.4.3">
    <property type="organism ID" value="3474"/>
</dbReference>
<dbReference type="Reactome" id="R-MMU-499943">
    <property type="pathway name" value="Interconversion of nucleotide di- and triphosphates"/>
</dbReference>
<dbReference type="BioGRID-ORCS" id="11637">
    <property type="hits" value="18 hits in 82 CRISPR screens"/>
</dbReference>
<dbReference type="ChiTaRS" id="Ak2">
    <property type="organism name" value="mouse"/>
</dbReference>
<dbReference type="PRO" id="PR:Q9WTP6"/>
<dbReference type="Proteomes" id="UP000000589">
    <property type="component" value="Chromosome 4"/>
</dbReference>
<dbReference type="RNAct" id="Q9WTP6">
    <property type="molecule type" value="protein"/>
</dbReference>
<dbReference type="Bgee" id="ENSMUSG00000028792">
    <property type="expression patterns" value="Expressed in small intestine Peyer's patch and 281 other cell types or tissues"/>
</dbReference>
<dbReference type="ExpressionAtlas" id="Q9WTP6">
    <property type="expression patterns" value="baseline and differential"/>
</dbReference>
<dbReference type="GO" id="GO:0005743">
    <property type="term" value="C:mitochondrial inner membrane"/>
    <property type="evidence" value="ECO:0007005"/>
    <property type="project" value="MGI"/>
</dbReference>
<dbReference type="GO" id="GO:0005758">
    <property type="term" value="C:mitochondrial intermembrane space"/>
    <property type="evidence" value="ECO:0007669"/>
    <property type="project" value="UniProtKB-SubCell"/>
</dbReference>
<dbReference type="GO" id="GO:0005739">
    <property type="term" value="C:mitochondrion"/>
    <property type="evidence" value="ECO:0007005"/>
    <property type="project" value="MGI"/>
</dbReference>
<dbReference type="GO" id="GO:0036126">
    <property type="term" value="C:sperm flagellum"/>
    <property type="evidence" value="ECO:0000314"/>
    <property type="project" value="MGI"/>
</dbReference>
<dbReference type="GO" id="GO:0097226">
    <property type="term" value="C:sperm mitochondrial sheath"/>
    <property type="evidence" value="ECO:0000314"/>
    <property type="project" value="MGI"/>
</dbReference>
<dbReference type="GO" id="GO:0004017">
    <property type="term" value="F:adenylate kinase activity"/>
    <property type="evidence" value="ECO:0007669"/>
    <property type="project" value="UniProtKB-UniRule"/>
</dbReference>
<dbReference type="GO" id="GO:0005524">
    <property type="term" value="F:ATP binding"/>
    <property type="evidence" value="ECO:0007669"/>
    <property type="project" value="UniProtKB-KW"/>
</dbReference>
<dbReference type="GO" id="GO:0006172">
    <property type="term" value="P:ADP biosynthetic process"/>
    <property type="evidence" value="ECO:0007669"/>
    <property type="project" value="UniProtKB-UniRule"/>
</dbReference>
<dbReference type="GO" id="GO:0046033">
    <property type="term" value="P:AMP metabolic process"/>
    <property type="evidence" value="ECO:0007669"/>
    <property type="project" value="UniProtKB-UniRule"/>
</dbReference>
<dbReference type="GO" id="GO:0046034">
    <property type="term" value="P:ATP metabolic process"/>
    <property type="evidence" value="ECO:0007669"/>
    <property type="project" value="UniProtKB-UniRule"/>
</dbReference>
<dbReference type="CDD" id="cd01428">
    <property type="entry name" value="ADK"/>
    <property type="match status" value="1"/>
</dbReference>
<dbReference type="FunFam" id="3.40.50.300:FF:000106">
    <property type="entry name" value="Adenylate kinase mitochondrial"/>
    <property type="match status" value="1"/>
</dbReference>
<dbReference type="Gene3D" id="3.40.50.300">
    <property type="entry name" value="P-loop containing nucleotide triphosphate hydrolases"/>
    <property type="match status" value="1"/>
</dbReference>
<dbReference type="HAMAP" id="MF_00235">
    <property type="entry name" value="Adenylate_kinase_Adk"/>
    <property type="match status" value="1"/>
</dbReference>
<dbReference type="HAMAP" id="MF_03168">
    <property type="entry name" value="Adenylate_kinase_AK2"/>
    <property type="match status" value="1"/>
</dbReference>
<dbReference type="InterPro" id="IPR006259">
    <property type="entry name" value="Adenyl_kin_sub"/>
</dbReference>
<dbReference type="InterPro" id="IPR000850">
    <property type="entry name" value="Adenylat/UMP-CMP_kin"/>
</dbReference>
<dbReference type="InterPro" id="IPR033690">
    <property type="entry name" value="Adenylat_kinase_CS"/>
</dbReference>
<dbReference type="InterPro" id="IPR007862">
    <property type="entry name" value="Adenylate_kinase_lid-dom"/>
</dbReference>
<dbReference type="InterPro" id="IPR028587">
    <property type="entry name" value="AK2"/>
</dbReference>
<dbReference type="InterPro" id="IPR027417">
    <property type="entry name" value="P-loop_NTPase"/>
</dbReference>
<dbReference type="NCBIfam" id="TIGR01351">
    <property type="entry name" value="adk"/>
    <property type="match status" value="1"/>
</dbReference>
<dbReference type="NCBIfam" id="NF001381">
    <property type="entry name" value="PRK00279.1-3"/>
    <property type="match status" value="1"/>
</dbReference>
<dbReference type="NCBIfam" id="NF011100">
    <property type="entry name" value="PRK14527.1"/>
    <property type="match status" value="1"/>
</dbReference>
<dbReference type="PANTHER" id="PTHR23359">
    <property type="entry name" value="NUCLEOTIDE KINASE"/>
    <property type="match status" value="1"/>
</dbReference>
<dbReference type="Pfam" id="PF00406">
    <property type="entry name" value="ADK"/>
    <property type="match status" value="1"/>
</dbReference>
<dbReference type="Pfam" id="PF05191">
    <property type="entry name" value="ADK_lid"/>
    <property type="match status" value="1"/>
</dbReference>
<dbReference type="PRINTS" id="PR00094">
    <property type="entry name" value="ADENYLTKNASE"/>
</dbReference>
<dbReference type="SUPFAM" id="SSF52540">
    <property type="entry name" value="P-loop containing nucleoside triphosphate hydrolases"/>
    <property type="match status" value="1"/>
</dbReference>
<dbReference type="PROSITE" id="PS00113">
    <property type="entry name" value="ADENYLATE_KINASE"/>
    <property type="match status" value="1"/>
</dbReference>
<evidence type="ECO:0000250" key="1">
    <source>
        <dbReference type="UniProtKB" id="P54819"/>
    </source>
</evidence>
<evidence type="ECO:0000255" key="2">
    <source>
        <dbReference type="HAMAP-Rule" id="MF_03168"/>
    </source>
</evidence>
<evidence type="ECO:0000269" key="3">
    <source>
    </source>
</evidence>
<evidence type="ECO:0000303" key="4">
    <source>
    </source>
</evidence>
<evidence type="ECO:0000303" key="5">
    <source>
    </source>
</evidence>
<evidence type="ECO:0000303" key="6">
    <source ref="1"/>
</evidence>
<evidence type="ECO:0000305" key="7"/>
<evidence type="ECO:0007744" key="8">
    <source>
    </source>
</evidence>
<evidence type="ECO:0007744" key="9">
    <source>
    </source>
</evidence>
<evidence type="ECO:0007744" key="10">
    <source>
    </source>
</evidence>
<comment type="function">
    <text evidence="2">Catalyzes the reversible transfer of the terminal phosphate group between ATP and AMP. Plays an important role in cellular energy homeostasis and in adenine nucleotide metabolism. Adenylate kinase activity is critical for regulation of the phosphate utilization and the AMP de novo biosynthesis pathways. Plays a key role in hematopoiesis.</text>
</comment>
<comment type="catalytic activity">
    <reaction evidence="2">
        <text>AMP + ATP = 2 ADP</text>
        <dbReference type="Rhea" id="RHEA:12973"/>
        <dbReference type="ChEBI" id="CHEBI:30616"/>
        <dbReference type="ChEBI" id="CHEBI:456215"/>
        <dbReference type="ChEBI" id="CHEBI:456216"/>
        <dbReference type="EC" id="2.7.4.3"/>
    </reaction>
</comment>
<comment type="subunit">
    <text evidence="2">Monomer.</text>
</comment>
<comment type="subcellular location">
    <subcellularLocation>
        <location evidence="2">Mitochondrion intermembrane space</location>
    </subcellularLocation>
</comment>
<comment type="alternative products">
    <event type="alternative splicing"/>
    <isoform>
        <id>Q9WTP6-1</id>
        <name>1</name>
        <sequence type="displayed"/>
    </isoform>
    <isoform>
        <id>Q9WTP6-2</id>
        <name>2</name>
        <sequence type="described" ref="VSP_036504"/>
    </isoform>
</comment>
<comment type="tissue specificity">
    <text evidence="3">Present in the inner ear. Not detected in the vestibule at any developmental stage. Present at high level in the cochlea uniquely in the stria vascularis at postnatal day 7 but not at birth. Present within the lumen of the stria vascularis capillaries. Not detected in the capillaries or vessels of the adjacent connective tissue (at protein level).</text>
</comment>
<comment type="domain">
    <text evidence="2">Consists of three domains, a large central CORE domain and two small peripheral domains, NMPbind and LID, which undergo movements during catalysis. The LID domain closes over the site of phosphoryl transfer upon ATP binding. Assembling and dissambling the active center during each catalytic cycle provides an effective means to prevent ATP hydrolysis.</text>
</comment>
<comment type="similarity">
    <text evidence="2">Belongs to the adenylate kinase family. AK2 subfamily.</text>
</comment>
<accession>Q9WTP6</accession>
<accession>A2A820</accession>
<accession>Q3THT3</accession>
<accession>Q3TI11</accession>
<accession>Q3TKI6</accession>
<accession>Q8C7I9</accession>
<accession>Q9CY37</accession>
<sequence>MAPNVLASEPEIPKGIRAVLLGPPGAGKGTQAPKLAENFCVCHLATGDMLRAMVASGSELGKKLKATMDAGKLVSDEMVVELIEKNLETPSCKNGFLLDGFPRTVRQAEMLDDLMEKRKEKLDSVIEFSIQDSLLIRRITGRLIHPKSGRSYHEEFNPPKEPMKDDITGEPLIRRSDDNEKALKTRLEAYHTQTTPLVEYYRKRGIHCAIDASQTPDIVFASILAAFSKATCKDLVMFI</sequence>